<reference key="1">
    <citation type="journal article" date="1992" name="Biochim. Biophys. Acta">
        <title>Sequence analysis of the catalytic subunit of H(+)-ATPase from porcine renal brush-border membranes.</title>
        <authorList>
            <person name="Sander I."/>
            <person name="Lottspeich F."/>
            <person name="Appelhans H."/>
            <person name="Kojro E."/>
            <person name="Spangenberg J."/>
            <person name="Weindel C."/>
            <person name="Haase W."/>
            <person name="Koepsell H."/>
        </authorList>
    </citation>
    <scope>NUCLEOTIDE SEQUENCE [MRNA]</scope>
    <source>
        <tissue>Kidney cortex</tissue>
    </source>
</reference>
<feature type="chain" id="PRO_0000144562" description="V-type proton ATPase catalytic subunit A">
    <location>
        <begin position="1"/>
        <end position="617"/>
    </location>
</feature>
<feature type="binding site" evidence="4">
    <location>
        <begin position="250"/>
        <end position="257"/>
    </location>
    <ligand>
        <name>ATP</name>
        <dbReference type="ChEBI" id="CHEBI:30616"/>
    </ligand>
</feature>
<feature type="modified residue" description="Phosphothreonine" evidence="2">
    <location>
        <position position="136"/>
    </location>
</feature>
<feature type="modified residue" description="Phosphoserine; by AMPK" evidence="3">
    <location>
        <position position="384"/>
    </location>
</feature>
<comment type="function">
    <text evidence="2">Catalytic subunit of the V1 complex of vacuolar(H+)-ATPase (V-ATPase), a multisubunit enzyme composed of a peripheral complex (V1) that hydrolyzes ATP and a membrane integral complex (V0) that translocates protons (By similarity). V-ATPase is responsible for acidifying and maintaining the pH of intracellular compartments and in some cell types, is targeted to the plasma membrane, where it is responsible for acidifying the extracellular environment (By similarity). In aerobic conditions, involved in intracellular iron homeostasis, thus triggering the activity of Fe(2+) prolyl hydroxylase (PHD) enzymes, and leading to HIF1A hydroxylation and subsequent proteasomal degradation (By similarity). May play a role in neurite development and synaptic connectivity (By similarity).</text>
</comment>
<comment type="catalytic activity">
    <reaction evidence="3">
        <text>ATP + H2O + 4 H(+)(in) = ADP + phosphate + 5 H(+)(out)</text>
        <dbReference type="Rhea" id="RHEA:57720"/>
        <dbReference type="ChEBI" id="CHEBI:15377"/>
        <dbReference type="ChEBI" id="CHEBI:15378"/>
        <dbReference type="ChEBI" id="CHEBI:30616"/>
        <dbReference type="ChEBI" id="CHEBI:43474"/>
        <dbReference type="ChEBI" id="CHEBI:456216"/>
        <dbReference type="EC" id="7.1.2.2"/>
    </reaction>
</comment>
<comment type="activity regulation">
    <text evidence="1">ATP hydrolysis occurs at the interface between the nucleotide-binding domains of subunits A and B (By similarity). ATP hydrolysis triggers a conformational change in the subunits D and F, which induces a shift of subunit d (By similarity). The c-ring is subsequently rotated and results in a continuous proton translocation across the membrane (By similarity).</text>
</comment>
<comment type="subunit">
    <text evidence="2 3">V-ATPase is a heteromultimeric enzyme made up of two complexes: the ATP-hydrolytic V1 complex and the proton translocation V0 complex (By similarity). The V1 complex consists of three catalytic AB heterodimers that form a heterohexamer, three peripheral stalks each consisting of EG heterodimers, one central rotor including subunits D and F, and the regulatory subunits C and H (By similarity). The proton translocation complex V0 consists of the proton transport subunit a, a ring of proteolipid subunits c9c'', rotary subunit d, subunits e and f, and the accessory subunits ATP6AP1/Ac45 and ATP6AP2/PRR (By similarity). Interacts with the V0 complex V-ATPase subunit a4 ATP6V0A4 (By similarity). Interacts with WFS1 (By similarity). Interacts with alpha-crystallin B chain/CRYAB and with MTOR, forming a ternary complex (By similarity).</text>
</comment>
<comment type="subcellular location">
    <subcellularLocation>
        <location evidence="2">Cytoplasm</location>
    </subcellularLocation>
    <subcellularLocation>
        <location evidence="3">Cytoplasm</location>
        <location evidence="3">Cytosol</location>
    </subcellularLocation>
    <subcellularLocation>
        <location evidence="2">Cytoplasmic vesicle</location>
        <location evidence="2">Secretory vesicle</location>
    </subcellularLocation>
    <subcellularLocation>
        <location evidence="1">Cytoplasmic vesicle</location>
        <location evidence="1">Clathrin-coated vesicle membrane</location>
        <topology evidence="5">Peripheral membrane protein</topology>
    </subcellularLocation>
    <subcellularLocation>
        <location evidence="3">Lysosome</location>
    </subcellularLocation>
    <text evidence="2">Co-localizes with WFS1 in the secretory granules in neuroblastoma cell lines.</text>
</comment>
<comment type="PTM">
    <text evidence="3">Phosphorylation at Ser-384 by AMPK down-regulates its enzyme activity.</text>
</comment>
<comment type="similarity">
    <text evidence="5">Belongs to the ATPase alpha/beta chains family.</text>
</comment>
<comment type="sequence caution" evidence="5">
    <conflict type="erroneous initiation">
        <sequence resource="EMBL-CDS" id="CAA44213"/>
    </conflict>
</comment>
<evidence type="ECO:0000250" key="1">
    <source>
        <dbReference type="UniProtKB" id="P31404"/>
    </source>
</evidence>
<evidence type="ECO:0000250" key="2">
    <source>
        <dbReference type="UniProtKB" id="P38606"/>
    </source>
</evidence>
<evidence type="ECO:0000250" key="3">
    <source>
        <dbReference type="UniProtKB" id="P50516"/>
    </source>
</evidence>
<evidence type="ECO:0000255" key="4"/>
<evidence type="ECO:0000305" key="5"/>
<protein>
    <recommendedName>
        <fullName>V-type proton ATPase catalytic subunit A</fullName>
        <shortName>V-ATPase subunit A</shortName>
        <ecNumber evidence="3">7.1.2.2</ecNumber>
    </recommendedName>
    <alternativeName>
        <fullName>V-ATPase 69 kDa subunit</fullName>
    </alternativeName>
    <alternativeName>
        <fullName>Vacuolar proton pump subunit alpha</fullName>
    </alternativeName>
</protein>
<name>VATA_PIG</name>
<keyword id="KW-0002">3D-structure</keyword>
<keyword id="KW-0067">ATP-binding</keyword>
<keyword id="KW-0963">Cytoplasm</keyword>
<keyword id="KW-0968">Cytoplasmic vesicle</keyword>
<keyword id="KW-0375">Hydrogen ion transport</keyword>
<keyword id="KW-0406">Ion transport</keyword>
<keyword id="KW-0458">Lysosome</keyword>
<keyword id="KW-0472">Membrane</keyword>
<keyword id="KW-0547">Nucleotide-binding</keyword>
<keyword id="KW-0597">Phosphoprotein</keyword>
<keyword id="KW-1185">Reference proteome</keyword>
<keyword id="KW-1278">Translocase</keyword>
<keyword id="KW-0813">Transport</keyword>
<gene>
    <name type="primary">ATP6V1A</name>
    <name type="synonym">ATP6A1</name>
    <name type="synonym">ATP6V1A1</name>
</gene>
<dbReference type="EC" id="7.1.2.2" evidence="3"/>
<dbReference type="EMBL" id="X62338">
    <property type="protein sequence ID" value="CAA44213.1"/>
    <property type="status" value="ALT_INIT"/>
    <property type="molecule type" value="mRNA"/>
</dbReference>
<dbReference type="PIR" id="A56807">
    <property type="entry name" value="A56807"/>
</dbReference>
<dbReference type="PIR" id="S18887">
    <property type="entry name" value="S18887"/>
</dbReference>
<dbReference type="RefSeq" id="NP_001004042.1">
    <property type="nucleotide sequence ID" value="NM_001004042.1"/>
</dbReference>
<dbReference type="PDB" id="7U8O">
    <property type="method" value="EM"/>
    <property type="resolution" value="3.50 A"/>
    <property type="chains" value="A/B/C=1-617"/>
</dbReference>
<dbReference type="PDB" id="7U8P">
    <property type="method" value="EM"/>
    <property type="resolution" value="3.70 A"/>
    <property type="chains" value="A/B/C=1-617"/>
</dbReference>
<dbReference type="PDB" id="7U8Q">
    <property type="method" value="EM"/>
    <property type="resolution" value="4.10 A"/>
    <property type="chains" value="A/B/C=1-617"/>
</dbReference>
<dbReference type="PDB" id="7U8R">
    <property type="method" value="EM"/>
    <property type="resolution" value="3.80 A"/>
    <property type="chains" value="A/B/C=1-617"/>
</dbReference>
<dbReference type="PDBsum" id="7U8O"/>
<dbReference type="PDBsum" id="7U8P"/>
<dbReference type="PDBsum" id="7U8Q"/>
<dbReference type="PDBsum" id="7U8R"/>
<dbReference type="EMDB" id="EMD-26385"/>
<dbReference type="EMDB" id="EMD-26386"/>
<dbReference type="EMDB" id="EMD-26387"/>
<dbReference type="EMDB" id="EMD-26388"/>
<dbReference type="SMR" id="Q29048"/>
<dbReference type="FunCoup" id="Q29048">
    <property type="interactions" value="1797"/>
</dbReference>
<dbReference type="STRING" id="9823.ENSSSCP00000052009"/>
<dbReference type="PaxDb" id="9823-ENSSSCP00000012697"/>
<dbReference type="PeptideAtlas" id="Q29048"/>
<dbReference type="GeneID" id="445531"/>
<dbReference type="KEGG" id="ssc:445531"/>
<dbReference type="CTD" id="523"/>
<dbReference type="eggNOG" id="KOG1352">
    <property type="taxonomic scope" value="Eukaryota"/>
</dbReference>
<dbReference type="InParanoid" id="Q29048"/>
<dbReference type="OrthoDB" id="1676488at2759"/>
<dbReference type="Proteomes" id="UP000008227">
    <property type="component" value="Unplaced"/>
</dbReference>
<dbReference type="Proteomes" id="UP000314985">
    <property type="component" value="Unplaced"/>
</dbReference>
<dbReference type="Proteomes" id="UP000694570">
    <property type="component" value="Unplaced"/>
</dbReference>
<dbReference type="Proteomes" id="UP000694571">
    <property type="component" value="Unplaced"/>
</dbReference>
<dbReference type="Proteomes" id="UP000694720">
    <property type="component" value="Unplaced"/>
</dbReference>
<dbReference type="Proteomes" id="UP000694722">
    <property type="component" value="Unplaced"/>
</dbReference>
<dbReference type="Proteomes" id="UP000694723">
    <property type="component" value="Unplaced"/>
</dbReference>
<dbReference type="Proteomes" id="UP000694724">
    <property type="component" value="Unplaced"/>
</dbReference>
<dbReference type="Proteomes" id="UP000694725">
    <property type="component" value="Unplaced"/>
</dbReference>
<dbReference type="Proteomes" id="UP000694726">
    <property type="component" value="Unplaced"/>
</dbReference>
<dbReference type="Proteomes" id="UP000694727">
    <property type="component" value="Unplaced"/>
</dbReference>
<dbReference type="Proteomes" id="UP000694728">
    <property type="component" value="Unplaced"/>
</dbReference>
<dbReference type="GO" id="GO:0030665">
    <property type="term" value="C:clathrin-coated vesicle membrane"/>
    <property type="evidence" value="ECO:0007669"/>
    <property type="project" value="UniProtKB-SubCell"/>
</dbReference>
<dbReference type="GO" id="GO:0005737">
    <property type="term" value="C:cytoplasm"/>
    <property type="evidence" value="ECO:0000250"/>
    <property type="project" value="UniProtKB"/>
</dbReference>
<dbReference type="GO" id="GO:0005829">
    <property type="term" value="C:cytosol"/>
    <property type="evidence" value="ECO:0000250"/>
    <property type="project" value="UniProtKB"/>
</dbReference>
<dbReference type="GO" id="GO:0005764">
    <property type="term" value="C:lysosome"/>
    <property type="evidence" value="ECO:0007669"/>
    <property type="project" value="UniProtKB-SubCell"/>
</dbReference>
<dbReference type="GO" id="GO:0005886">
    <property type="term" value="C:plasma membrane"/>
    <property type="evidence" value="ECO:0000250"/>
    <property type="project" value="UniProtKB"/>
</dbReference>
<dbReference type="GO" id="GO:0030133">
    <property type="term" value="C:transport vesicle"/>
    <property type="evidence" value="ECO:0007669"/>
    <property type="project" value="UniProtKB-SubCell"/>
</dbReference>
<dbReference type="GO" id="GO:0000221">
    <property type="term" value="C:vacuolar proton-transporting V-type ATPase, V1 domain"/>
    <property type="evidence" value="ECO:0000250"/>
    <property type="project" value="UniProtKB"/>
</dbReference>
<dbReference type="GO" id="GO:0005524">
    <property type="term" value="F:ATP binding"/>
    <property type="evidence" value="ECO:0007669"/>
    <property type="project" value="UniProtKB-KW"/>
</dbReference>
<dbReference type="GO" id="GO:0016887">
    <property type="term" value="F:ATP hydrolysis activity"/>
    <property type="evidence" value="ECO:0007669"/>
    <property type="project" value="InterPro"/>
</dbReference>
<dbReference type="GO" id="GO:0046961">
    <property type="term" value="F:proton-transporting ATPase activity, rotational mechanism"/>
    <property type="evidence" value="ECO:0000250"/>
    <property type="project" value="UniProtKB"/>
</dbReference>
<dbReference type="GO" id="GO:0046034">
    <property type="term" value="P:ATP metabolic process"/>
    <property type="evidence" value="ECO:0007669"/>
    <property type="project" value="InterPro"/>
</dbReference>
<dbReference type="GO" id="GO:0036295">
    <property type="term" value="P:cellular response to increased oxygen levels"/>
    <property type="evidence" value="ECO:0000250"/>
    <property type="project" value="UniProtKB"/>
</dbReference>
<dbReference type="GO" id="GO:0006879">
    <property type="term" value="P:intracellular iron ion homeostasis"/>
    <property type="evidence" value="ECO:0000250"/>
    <property type="project" value="UniProtKB"/>
</dbReference>
<dbReference type="GO" id="GO:1902600">
    <property type="term" value="P:proton transmembrane transport"/>
    <property type="evidence" value="ECO:0000318"/>
    <property type="project" value="GO_Central"/>
</dbReference>
<dbReference type="CDD" id="cd18111">
    <property type="entry name" value="ATP-synt_V_A-type_alpha_C"/>
    <property type="match status" value="1"/>
</dbReference>
<dbReference type="CDD" id="cd18119">
    <property type="entry name" value="ATP-synt_V_A-type_alpha_N"/>
    <property type="match status" value="1"/>
</dbReference>
<dbReference type="CDD" id="cd01134">
    <property type="entry name" value="V_A-ATPase_A"/>
    <property type="match status" value="1"/>
</dbReference>
<dbReference type="FunFam" id="1.10.1140.10:FF:000002">
    <property type="entry name" value="V-type proton ATPase catalytic subunit A"/>
    <property type="match status" value="1"/>
</dbReference>
<dbReference type="FunFam" id="2.40.30.20:FF:000002">
    <property type="entry name" value="V-type proton ATPase catalytic subunit A"/>
    <property type="match status" value="1"/>
</dbReference>
<dbReference type="FunFam" id="2.40.50.100:FF:000008">
    <property type="entry name" value="V-type proton ATPase catalytic subunit A"/>
    <property type="match status" value="1"/>
</dbReference>
<dbReference type="FunFam" id="3.40.50.300:FF:000052">
    <property type="entry name" value="V-type proton ATPase catalytic subunit A"/>
    <property type="match status" value="1"/>
</dbReference>
<dbReference type="Gene3D" id="2.40.30.20">
    <property type="match status" value="1"/>
</dbReference>
<dbReference type="Gene3D" id="2.40.50.100">
    <property type="match status" value="1"/>
</dbReference>
<dbReference type="Gene3D" id="1.10.1140.10">
    <property type="entry name" value="Bovine Mitochondrial F1-atpase, Atp Synthase Beta Chain, Chain D, domain 3"/>
    <property type="match status" value="1"/>
</dbReference>
<dbReference type="Gene3D" id="3.40.50.300">
    <property type="entry name" value="P-loop containing nucleotide triphosphate hydrolases"/>
    <property type="match status" value="1"/>
</dbReference>
<dbReference type="HAMAP" id="MF_00309">
    <property type="entry name" value="ATP_synth_A_arch"/>
    <property type="match status" value="1"/>
</dbReference>
<dbReference type="InterPro" id="IPR055190">
    <property type="entry name" value="ATP-synt_VA_C"/>
</dbReference>
<dbReference type="InterPro" id="IPR031686">
    <property type="entry name" value="ATP-synth_a_Xtn"/>
</dbReference>
<dbReference type="InterPro" id="IPR023366">
    <property type="entry name" value="ATP_synth_asu-like_sf"/>
</dbReference>
<dbReference type="InterPro" id="IPR020003">
    <property type="entry name" value="ATPase_a/bsu_AS"/>
</dbReference>
<dbReference type="InterPro" id="IPR004100">
    <property type="entry name" value="ATPase_F1/V1/A1_a/bsu_N"/>
</dbReference>
<dbReference type="InterPro" id="IPR036121">
    <property type="entry name" value="ATPase_F1/V1/A1_a/bsu_N_sf"/>
</dbReference>
<dbReference type="InterPro" id="IPR000194">
    <property type="entry name" value="ATPase_F1/V1/A1_a/bsu_nucl-bd"/>
</dbReference>
<dbReference type="InterPro" id="IPR024034">
    <property type="entry name" value="ATPase_F1/V1_b/a_C"/>
</dbReference>
<dbReference type="InterPro" id="IPR005725">
    <property type="entry name" value="ATPase_V1-cplx_asu"/>
</dbReference>
<dbReference type="InterPro" id="IPR027417">
    <property type="entry name" value="P-loop_NTPase"/>
</dbReference>
<dbReference type="InterPro" id="IPR022878">
    <property type="entry name" value="V-ATPase_asu"/>
</dbReference>
<dbReference type="NCBIfam" id="NF003220">
    <property type="entry name" value="PRK04192.1"/>
    <property type="match status" value="1"/>
</dbReference>
<dbReference type="NCBIfam" id="TIGR01042">
    <property type="entry name" value="V-ATPase_V1_A"/>
    <property type="match status" value="1"/>
</dbReference>
<dbReference type="PANTHER" id="PTHR43607">
    <property type="entry name" value="V-TYPE PROTON ATPASE CATALYTIC SUBUNIT A"/>
    <property type="match status" value="1"/>
</dbReference>
<dbReference type="PANTHER" id="PTHR43607:SF9">
    <property type="entry name" value="V-TYPE PROTON ATPASE CATALYTIC SUBUNIT A"/>
    <property type="match status" value="1"/>
</dbReference>
<dbReference type="Pfam" id="PF00006">
    <property type="entry name" value="ATP-synt_ab"/>
    <property type="match status" value="1"/>
</dbReference>
<dbReference type="Pfam" id="PF02874">
    <property type="entry name" value="ATP-synt_ab_N"/>
    <property type="match status" value="1"/>
</dbReference>
<dbReference type="Pfam" id="PF16886">
    <property type="entry name" value="ATP-synt_ab_Xtn"/>
    <property type="match status" value="1"/>
</dbReference>
<dbReference type="Pfam" id="PF22919">
    <property type="entry name" value="ATP-synt_VA_C"/>
    <property type="match status" value="1"/>
</dbReference>
<dbReference type="SUPFAM" id="SSF47917">
    <property type="entry name" value="C-terminal domain of alpha and beta subunits of F1 ATP synthase"/>
    <property type="match status" value="1"/>
</dbReference>
<dbReference type="SUPFAM" id="SSF50615">
    <property type="entry name" value="N-terminal domain of alpha and beta subunits of F1 ATP synthase"/>
    <property type="match status" value="1"/>
</dbReference>
<dbReference type="SUPFAM" id="SSF52540">
    <property type="entry name" value="P-loop containing nucleoside triphosphate hydrolases"/>
    <property type="match status" value="1"/>
</dbReference>
<dbReference type="PROSITE" id="PS00152">
    <property type="entry name" value="ATPASE_ALPHA_BETA"/>
    <property type="match status" value="1"/>
</dbReference>
<proteinExistence type="evidence at protein level"/>
<sequence length="617" mass="68318">MDFSKLPKILDEDKESTFGYVHGVSGPVVTACDMAGAAMYELVRVGHSELVGEIIRLEGDMATIQVYEETSGVSVGDPVLRTGKPLSVELGPGIMGAIFDGIQRPLSDISSQTQSIYIPRGVNVSALSRDVKWEFTPSKNLRVGSHITGGDIYGIVNENSLIKHRIMLPPRNRGTVTYIAPPGNYDTSDVVLELEFEGVKEKFSMVQVWPVRQVRPVTEKLPANHPLLTGQRVLDALFPCVQGGTTAIPGAFGCGKTVISQSLSKYSNSDVIIYVGCGERVNEMSEVLRDFPELTMEVDGKVESIMKRTALVANTSNMPVAAREASIYTGITLSEYFRDMGYHVSMMANSTSRWAEALREISGRLAEMPADSGYPAYLGARLASFYERAGRVKCLGNPEREGSVTIVGAVSPPGGDFSDPVTSATLGIVQVFWGLDKKLAQRKHFPSVNWLISYSKYMRALDEYYDKHFTEFVPLRTKAKEILQEEEDLAEIVQLVGKASLAETDKITLEVAKLIKDDFLQQNGYTPYDRFCPFYKTVGMLSNMIAFYDLARRAVETTAQSDNKITWSIIREHMGEILYKLSSMKFKDPVKDGEAKIKADYAQLLEDVQNAFRSLED</sequence>
<accession>Q29048</accession>
<organism>
    <name type="scientific">Sus scrofa</name>
    <name type="common">Pig</name>
    <dbReference type="NCBI Taxonomy" id="9823"/>
    <lineage>
        <taxon>Eukaryota</taxon>
        <taxon>Metazoa</taxon>
        <taxon>Chordata</taxon>
        <taxon>Craniata</taxon>
        <taxon>Vertebrata</taxon>
        <taxon>Euteleostomi</taxon>
        <taxon>Mammalia</taxon>
        <taxon>Eutheria</taxon>
        <taxon>Laurasiatheria</taxon>
        <taxon>Artiodactyla</taxon>
        <taxon>Suina</taxon>
        <taxon>Suidae</taxon>
        <taxon>Sus</taxon>
    </lineage>
</organism>